<name>EFP_SHIB3</name>
<sequence>MATYYSNDFRAGLKIMLDGEPYAVEASEFVKPGKGQAFARVKLRRLLTGTRVEKTFKSTDSAEGADVVDMNLTYLYNDGEFWHFMNNETFEQLSADAKAIGDNAKWLLDQAECIVTLWNGQPISVTPPNFVELEIVDTDPGLKGDTAGTGGKPATLSTGAVVKVPLFVQIGEVIKVDTRSGEYVSRVK</sequence>
<reference key="1">
    <citation type="submission" date="2008-05" db="EMBL/GenBank/DDBJ databases">
        <title>Complete sequence of Shigella boydii serotype 18 strain BS512.</title>
        <authorList>
            <person name="Rasko D.A."/>
            <person name="Rosovitz M."/>
            <person name="Maurelli A.T."/>
            <person name="Myers G."/>
            <person name="Seshadri R."/>
            <person name="Cer R."/>
            <person name="Jiang L."/>
            <person name="Ravel J."/>
            <person name="Sebastian Y."/>
        </authorList>
    </citation>
    <scope>NUCLEOTIDE SEQUENCE [LARGE SCALE GENOMIC DNA]</scope>
    <source>
        <strain>CDC 3083-94 / BS512</strain>
    </source>
</reference>
<comment type="function">
    <text evidence="1">Involved in peptide bond synthesis. Alleviates ribosome stalling that occurs when 3 or more consecutive Pro residues or the sequence PPG is present in a protein, possibly by augmenting the peptidyl transferase activity of the ribosome. Modification of Lys-34 is required for alleviation.</text>
</comment>
<comment type="pathway">
    <text evidence="1">Protein biosynthesis; polypeptide chain elongation.</text>
</comment>
<comment type="subcellular location">
    <subcellularLocation>
        <location evidence="1">Cytoplasm</location>
    </subcellularLocation>
</comment>
<comment type="PTM">
    <text evidence="1">Is beta-lysylated on the epsilon-amino group of Lys-34 by the combined action of EpmA and EpmB, and then hydroxylated on the C5 position of the same residue by EpmC. Lysylation is critical for the stimulatory effect of EF-P on peptide-bond formation. The lysylation moiety would extend toward the peptidyltransferase center and stabilize the terminal 3-CCA end of the tRNA. The hydroxylation of the C5 position on Lys-34 would allow additional potential stabilizing hydrogen-bond interactions with the P-tRNA.</text>
</comment>
<comment type="similarity">
    <text evidence="1">Belongs to the elongation factor P family.</text>
</comment>
<dbReference type="EMBL" id="CP001063">
    <property type="protein sequence ID" value="ACD09653.1"/>
    <property type="molecule type" value="Genomic_DNA"/>
</dbReference>
<dbReference type="RefSeq" id="WP_000257278.1">
    <property type="nucleotide sequence ID" value="NC_010658.1"/>
</dbReference>
<dbReference type="SMR" id="B2TY23"/>
<dbReference type="STRING" id="344609.SbBS512_E4677"/>
<dbReference type="GeneID" id="93777677"/>
<dbReference type="KEGG" id="sbc:SbBS512_E4677"/>
<dbReference type="HOGENOM" id="CLU_074944_0_0_6"/>
<dbReference type="UniPathway" id="UPA00345"/>
<dbReference type="Proteomes" id="UP000001030">
    <property type="component" value="Chromosome"/>
</dbReference>
<dbReference type="GO" id="GO:0005829">
    <property type="term" value="C:cytosol"/>
    <property type="evidence" value="ECO:0007669"/>
    <property type="project" value="UniProtKB-ARBA"/>
</dbReference>
<dbReference type="GO" id="GO:0003746">
    <property type="term" value="F:translation elongation factor activity"/>
    <property type="evidence" value="ECO:0007669"/>
    <property type="project" value="UniProtKB-UniRule"/>
</dbReference>
<dbReference type="GO" id="GO:0043043">
    <property type="term" value="P:peptide biosynthetic process"/>
    <property type="evidence" value="ECO:0007669"/>
    <property type="project" value="InterPro"/>
</dbReference>
<dbReference type="CDD" id="cd04470">
    <property type="entry name" value="S1_EF-P_repeat_1"/>
    <property type="match status" value="1"/>
</dbReference>
<dbReference type="CDD" id="cd05794">
    <property type="entry name" value="S1_EF-P_repeat_2"/>
    <property type="match status" value="1"/>
</dbReference>
<dbReference type="FunFam" id="2.30.30.30:FF:000003">
    <property type="entry name" value="Elongation factor P"/>
    <property type="match status" value="1"/>
</dbReference>
<dbReference type="FunFam" id="2.40.50.140:FF:000004">
    <property type="entry name" value="Elongation factor P"/>
    <property type="match status" value="1"/>
</dbReference>
<dbReference type="FunFam" id="2.40.50.140:FF:000009">
    <property type="entry name" value="Elongation factor P"/>
    <property type="match status" value="1"/>
</dbReference>
<dbReference type="Gene3D" id="2.30.30.30">
    <property type="match status" value="1"/>
</dbReference>
<dbReference type="Gene3D" id="2.40.50.140">
    <property type="entry name" value="Nucleic acid-binding proteins"/>
    <property type="match status" value="2"/>
</dbReference>
<dbReference type="HAMAP" id="MF_00141">
    <property type="entry name" value="EF_P"/>
    <property type="match status" value="1"/>
</dbReference>
<dbReference type="InterPro" id="IPR015365">
    <property type="entry name" value="Elong-fact-P_C"/>
</dbReference>
<dbReference type="InterPro" id="IPR012340">
    <property type="entry name" value="NA-bd_OB-fold"/>
</dbReference>
<dbReference type="InterPro" id="IPR014722">
    <property type="entry name" value="Rib_uL2_dom2"/>
</dbReference>
<dbReference type="InterPro" id="IPR020599">
    <property type="entry name" value="Transl_elong_fac_P/YeiP"/>
</dbReference>
<dbReference type="InterPro" id="IPR013185">
    <property type="entry name" value="Transl_elong_KOW-like"/>
</dbReference>
<dbReference type="InterPro" id="IPR001059">
    <property type="entry name" value="Transl_elong_P/YeiP_cen"/>
</dbReference>
<dbReference type="InterPro" id="IPR013852">
    <property type="entry name" value="Transl_elong_P/YeiP_CS"/>
</dbReference>
<dbReference type="InterPro" id="IPR011768">
    <property type="entry name" value="Transl_elongation_fac_P"/>
</dbReference>
<dbReference type="InterPro" id="IPR008991">
    <property type="entry name" value="Translation_prot_SH3-like_sf"/>
</dbReference>
<dbReference type="NCBIfam" id="TIGR00038">
    <property type="entry name" value="efp"/>
    <property type="match status" value="1"/>
</dbReference>
<dbReference type="NCBIfam" id="NF001810">
    <property type="entry name" value="PRK00529.1"/>
    <property type="match status" value="1"/>
</dbReference>
<dbReference type="PANTHER" id="PTHR30053">
    <property type="entry name" value="ELONGATION FACTOR P"/>
    <property type="match status" value="1"/>
</dbReference>
<dbReference type="PANTHER" id="PTHR30053:SF12">
    <property type="entry name" value="ELONGATION FACTOR P (EF-P) FAMILY PROTEIN"/>
    <property type="match status" value="1"/>
</dbReference>
<dbReference type="Pfam" id="PF01132">
    <property type="entry name" value="EFP"/>
    <property type="match status" value="1"/>
</dbReference>
<dbReference type="Pfam" id="PF08207">
    <property type="entry name" value="EFP_N"/>
    <property type="match status" value="1"/>
</dbReference>
<dbReference type="Pfam" id="PF09285">
    <property type="entry name" value="Elong-fact-P_C"/>
    <property type="match status" value="1"/>
</dbReference>
<dbReference type="PIRSF" id="PIRSF005901">
    <property type="entry name" value="EF-P"/>
    <property type="match status" value="1"/>
</dbReference>
<dbReference type="SMART" id="SM01185">
    <property type="entry name" value="EFP"/>
    <property type="match status" value="1"/>
</dbReference>
<dbReference type="SMART" id="SM00841">
    <property type="entry name" value="Elong-fact-P_C"/>
    <property type="match status" value="1"/>
</dbReference>
<dbReference type="SUPFAM" id="SSF50249">
    <property type="entry name" value="Nucleic acid-binding proteins"/>
    <property type="match status" value="2"/>
</dbReference>
<dbReference type="SUPFAM" id="SSF50104">
    <property type="entry name" value="Translation proteins SH3-like domain"/>
    <property type="match status" value="1"/>
</dbReference>
<dbReference type="PROSITE" id="PS01275">
    <property type="entry name" value="EFP"/>
    <property type="match status" value="1"/>
</dbReference>
<accession>B2TY23</accession>
<keyword id="KW-0963">Cytoplasm</keyword>
<keyword id="KW-0251">Elongation factor</keyword>
<keyword id="KW-0379">Hydroxylation</keyword>
<keyword id="KW-0648">Protein biosynthesis</keyword>
<keyword id="KW-1185">Reference proteome</keyword>
<gene>
    <name evidence="1" type="primary">efp</name>
    <name type="ordered locus">SbBS512_E4677</name>
</gene>
<evidence type="ECO:0000255" key="1">
    <source>
        <dbReference type="HAMAP-Rule" id="MF_00141"/>
    </source>
</evidence>
<organism>
    <name type="scientific">Shigella boydii serotype 18 (strain CDC 3083-94 / BS512)</name>
    <dbReference type="NCBI Taxonomy" id="344609"/>
    <lineage>
        <taxon>Bacteria</taxon>
        <taxon>Pseudomonadati</taxon>
        <taxon>Pseudomonadota</taxon>
        <taxon>Gammaproteobacteria</taxon>
        <taxon>Enterobacterales</taxon>
        <taxon>Enterobacteriaceae</taxon>
        <taxon>Shigella</taxon>
    </lineage>
</organism>
<feature type="chain" id="PRO_1000096206" description="Elongation factor P">
    <location>
        <begin position="1"/>
        <end position="188"/>
    </location>
</feature>
<feature type="modified residue" description="N6-(3,6-diaminohexanoyl)-5-hydroxylysine" evidence="1">
    <location>
        <position position="34"/>
    </location>
</feature>
<protein>
    <recommendedName>
        <fullName evidence="1">Elongation factor P</fullName>
        <shortName evidence="1">EF-P</shortName>
    </recommendedName>
</protein>
<proteinExistence type="inferred from homology"/>